<protein>
    <recommendedName>
        <fullName>GMP synthase [glutamine-hydrolyzing]</fullName>
        <ecNumber>6.3.5.2</ecNumber>
    </recommendedName>
    <alternativeName>
        <fullName>GMP synthetase</fullName>
    </alternativeName>
    <alternativeName>
        <fullName>Glutamine amidotransferase</fullName>
    </alternativeName>
</protein>
<accession>O52831</accession>
<accession>Q9RHY6</accession>
<organism>
    <name type="scientific">Corynebacterium ammoniagenes</name>
    <name type="common">Brevibacterium ammoniagenes</name>
    <dbReference type="NCBI Taxonomy" id="1697"/>
    <lineage>
        <taxon>Bacteria</taxon>
        <taxon>Bacillati</taxon>
        <taxon>Actinomycetota</taxon>
        <taxon>Actinomycetes</taxon>
        <taxon>Mycobacteriales</taxon>
        <taxon>Corynebacteriaceae</taxon>
        <taxon>Corynebacterium</taxon>
    </lineage>
</organism>
<comment type="function">
    <text evidence="1">Catalyzes the synthesis of GMP from XMP.</text>
</comment>
<comment type="catalytic activity">
    <reaction>
        <text>XMP + L-glutamine + ATP + H2O = GMP + L-glutamate + AMP + diphosphate + 2 H(+)</text>
        <dbReference type="Rhea" id="RHEA:11680"/>
        <dbReference type="ChEBI" id="CHEBI:15377"/>
        <dbReference type="ChEBI" id="CHEBI:15378"/>
        <dbReference type="ChEBI" id="CHEBI:29985"/>
        <dbReference type="ChEBI" id="CHEBI:30616"/>
        <dbReference type="ChEBI" id="CHEBI:33019"/>
        <dbReference type="ChEBI" id="CHEBI:57464"/>
        <dbReference type="ChEBI" id="CHEBI:58115"/>
        <dbReference type="ChEBI" id="CHEBI:58359"/>
        <dbReference type="ChEBI" id="CHEBI:456215"/>
        <dbReference type="EC" id="6.3.5.2"/>
    </reaction>
</comment>
<comment type="pathway">
    <text>Purine metabolism; GMP biosynthesis; GMP from XMP (L-Gln route): step 1/1.</text>
</comment>
<comment type="subunit">
    <text evidence="1">Homodimer.</text>
</comment>
<dbReference type="EC" id="6.3.5.2"/>
<dbReference type="EMBL" id="Y10499">
    <property type="protein sequence ID" value="CAA71524.1"/>
    <property type="molecule type" value="Genomic_DNA"/>
</dbReference>
<dbReference type="EMBL" id="AB003155">
    <property type="protein sequence ID" value="BAA89456.1"/>
    <property type="molecule type" value="Genomic_DNA"/>
</dbReference>
<dbReference type="SMR" id="O52831"/>
<dbReference type="MEROPS" id="C26.A07"/>
<dbReference type="UniPathway" id="UPA00189">
    <property type="reaction ID" value="UER00296"/>
</dbReference>
<dbReference type="GO" id="GO:0005829">
    <property type="term" value="C:cytosol"/>
    <property type="evidence" value="ECO:0007669"/>
    <property type="project" value="TreeGrafter"/>
</dbReference>
<dbReference type="GO" id="GO:0005524">
    <property type="term" value="F:ATP binding"/>
    <property type="evidence" value="ECO:0007669"/>
    <property type="project" value="UniProtKB-UniRule"/>
</dbReference>
<dbReference type="GO" id="GO:0003921">
    <property type="term" value="F:GMP synthase activity"/>
    <property type="evidence" value="ECO:0007669"/>
    <property type="project" value="InterPro"/>
</dbReference>
<dbReference type="CDD" id="cd01742">
    <property type="entry name" value="GATase1_GMP_Synthase"/>
    <property type="match status" value="1"/>
</dbReference>
<dbReference type="CDD" id="cd01997">
    <property type="entry name" value="GMP_synthase_C"/>
    <property type="match status" value="1"/>
</dbReference>
<dbReference type="FunFam" id="3.30.300.10:FF:000002">
    <property type="entry name" value="GMP synthase [glutamine-hydrolyzing]"/>
    <property type="match status" value="1"/>
</dbReference>
<dbReference type="FunFam" id="3.40.50.620:FF:000001">
    <property type="entry name" value="GMP synthase [glutamine-hydrolyzing]"/>
    <property type="match status" value="1"/>
</dbReference>
<dbReference type="FunFam" id="3.40.50.880:FF:000001">
    <property type="entry name" value="GMP synthase [glutamine-hydrolyzing]"/>
    <property type="match status" value="1"/>
</dbReference>
<dbReference type="Gene3D" id="3.30.300.10">
    <property type="match status" value="1"/>
</dbReference>
<dbReference type="Gene3D" id="3.40.50.880">
    <property type="match status" value="1"/>
</dbReference>
<dbReference type="Gene3D" id="3.40.50.620">
    <property type="entry name" value="HUPs"/>
    <property type="match status" value="1"/>
</dbReference>
<dbReference type="HAMAP" id="MF_00344">
    <property type="entry name" value="GMP_synthase"/>
    <property type="match status" value="1"/>
</dbReference>
<dbReference type="InterPro" id="IPR029062">
    <property type="entry name" value="Class_I_gatase-like"/>
</dbReference>
<dbReference type="InterPro" id="IPR017926">
    <property type="entry name" value="GATASE"/>
</dbReference>
<dbReference type="InterPro" id="IPR001674">
    <property type="entry name" value="GMP_synth_C"/>
</dbReference>
<dbReference type="InterPro" id="IPR004739">
    <property type="entry name" value="GMP_synth_GATase"/>
</dbReference>
<dbReference type="InterPro" id="IPR022955">
    <property type="entry name" value="GMP_synthase"/>
</dbReference>
<dbReference type="InterPro" id="IPR025777">
    <property type="entry name" value="GMPS_ATP_PPase_dom"/>
</dbReference>
<dbReference type="InterPro" id="IPR022310">
    <property type="entry name" value="NAD/GMP_synthase"/>
</dbReference>
<dbReference type="InterPro" id="IPR014729">
    <property type="entry name" value="Rossmann-like_a/b/a_fold"/>
</dbReference>
<dbReference type="NCBIfam" id="TIGR00884">
    <property type="entry name" value="guaA_Cterm"/>
    <property type="match status" value="1"/>
</dbReference>
<dbReference type="NCBIfam" id="TIGR00888">
    <property type="entry name" value="guaA_Nterm"/>
    <property type="match status" value="1"/>
</dbReference>
<dbReference type="NCBIfam" id="NF000848">
    <property type="entry name" value="PRK00074.1"/>
    <property type="match status" value="1"/>
</dbReference>
<dbReference type="PANTHER" id="PTHR11922:SF2">
    <property type="entry name" value="GMP SYNTHASE [GLUTAMINE-HYDROLYZING]"/>
    <property type="match status" value="1"/>
</dbReference>
<dbReference type="PANTHER" id="PTHR11922">
    <property type="entry name" value="GMP SYNTHASE-RELATED"/>
    <property type="match status" value="1"/>
</dbReference>
<dbReference type="Pfam" id="PF00117">
    <property type="entry name" value="GATase"/>
    <property type="match status" value="1"/>
</dbReference>
<dbReference type="Pfam" id="PF00958">
    <property type="entry name" value="GMP_synt_C"/>
    <property type="match status" value="1"/>
</dbReference>
<dbReference type="Pfam" id="PF02540">
    <property type="entry name" value="NAD_synthase"/>
    <property type="match status" value="1"/>
</dbReference>
<dbReference type="PRINTS" id="PR00097">
    <property type="entry name" value="ANTSNTHASEII"/>
</dbReference>
<dbReference type="PRINTS" id="PR00099">
    <property type="entry name" value="CPSGATASE"/>
</dbReference>
<dbReference type="PRINTS" id="PR00096">
    <property type="entry name" value="GATASE"/>
</dbReference>
<dbReference type="SUPFAM" id="SSF52402">
    <property type="entry name" value="Adenine nucleotide alpha hydrolases-like"/>
    <property type="match status" value="1"/>
</dbReference>
<dbReference type="SUPFAM" id="SSF52317">
    <property type="entry name" value="Class I glutamine amidotransferase-like"/>
    <property type="match status" value="1"/>
</dbReference>
<dbReference type="SUPFAM" id="SSF54810">
    <property type="entry name" value="GMP synthetase C-terminal dimerisation domain"/>
    <property type="match status" value="1"/>
</dbReference>
<dbReference type="PROSITE" id="PS51273">
    <property type="entry name" value="GATASE_TYPE_1"/>
    <property type="match status" value="1"/>
</dbReference>
<dbReference type="PROSITE" id="PS51553">
    <property type="entry name" value="GMPS_ATP_PPASE"/>
    <property type="match status" value="1"/>
</dbReference>
<sequence length="524" mass="56180">MTQPATTPRPVLVVDFGAQYAQLIARRVREASIYSEVVPHSATVKEIKAKNPAALILSGGPSSVYADGAPQLKPELLELGVPVFGICYGFQAMNHALGGNVAQTGDREYGRTEITHTGGVLHDGLEENHKVWMSHGDAVDKAPEGFTVTASSAGAPVAAMECVAKQMAGVQYHPEVMHSPHGQEVLVRFLTEVAGLEQTWTSANIAQQLIDDVRAQIGPEGRAICGLSGGVDSAVAAALVQRAIGDRLTCVFVDHGLLRAGEREQVEKDFVASTGAKLITAHEADAFLSKLAGVTDPEAKRKAIGAEFIRSFERAVAQALEESPEDSTVDFLVQGTLYPDVVESGGGDGTANIKSHHNVGGLPDDVEFELVEPLRLLFKDEVRAVGRELGLPEEIVARQPFPGPGLGIRIIGEVTEERLEILRQADLIARTELTNAGLDGDIWQCPVVLLADVRSVGVQGDGRTYGHPIVLRPVSSEDAMTADWTRVPYDVLEKISTRITNEVNDVNRVVVDITSKPPGTIEWE</sequence>
<name>GUAA_CORAM</name>
<proteinExistence type="inferred from homology"/>
<gene>
    <name type="primary">guaA</name>
</gene>
<evidence type="ECO:0000250" key="1"/>
<evidence type="ECO:0000305" key="2"/>
<feature type="chain" id="PRO_0000140116" description="GMP synthase [glutamine-hydrolyzing]">
    <location>
        <begin position="1"/>
        <end position="524"/>
    </location>
</feature>
<feature type="domain" description="Glutamine amidotransferase type-1">
    <location>
        <begin position="10"/>
        <end position="199"/>
    </location>
</feature>
<feature type="domain" description="GMPS ATP-PPase">
    <location>
        <begin position="200"/>
        <end position="398"/>
    </location>
</feature>
<feature type="active site" description="Nucleophile" evidence="1">
    <location>
        <position position="87"/>
    </location>
</feature>
<feature type="active site" evidence="1">
    <location>
        <position position="173"/>
    </location>
</feature>
<feature type="active site" evidence="1">
    <location>
        <position position="175"/>
    </location>
</feature>
<feature type="binding site" evidence="1">
    <location>
        <begin position="228"/>
        <end position="234"/>
    </location>
    <ligand>
        <name>ATP</name>
        <dbReference type="ChEBI" id="CHEBI:30616"/>
    </ligand>
</feature>
<feature type="sequence conflict" description="In Ref. 1; CAA71524." evidence="2" ref="1">
    <original>G</original>
    <variation>R</variation>
    <location>
        <position position="110"/>
    </location>
</feature>
<feature type="sequence conflict" description="In Ref. 1; CAA71524." evidence="2" ref="1">
    <original>KL</original>
    <variation>NV</variation>
    <location>
        <begin position="277"/>
        <end position="278"/>
    </location>
</feature>
<feature type="sequence conflict" description="In Ref. 1; CAA71524." evidence="2" ref="1">
    <original>G</original>
    <variation>R</variation>
    <location>
        <position position="346"/>
    </location>
</feature>
<feature type="sequence conflict" description="In Ref. 1; CAA71524." evidence="2" ref="1">
    <original>FKDEVRAVG</original>
    <variation>LRRSPCRS</variation>
    <location>
        <begin position="378"/>
        <end position="386"/>
    </location>
</feature>
<feature type="sequence conflict" description="In Ref. 1; CAA71524." evidence="2" ref="1">
    <original>PVVLLADVRSVGVQGDGRTYG</original>
    <variation>QSYCLPMSAPSSPRRRPHLR</variation>
    <location>
        <begin position="446"/>
        <end position="466"/>
    </location>
</feature>
<keyword id="KW-0067">ATP-binding</keyword>
<keyword id="KW-0315">Glutamine amidotransferase</keyword>
<keyword id="KW-0332">GMP biosynthesis</keyword>
<keyword id="KW-0436">Ligase</keyword>
<keyword id="KW-0547">Nucleotide-binding</keyword>
<keyword id="KW-0658">Purine biosynthesis</keyword>
<reference key="1">
    <citation type="submission" date="1997-01" db="EMBL/GenBank/DDBJ databases">
        <authorList>
            <person name="Han J.K."/>
        </authorList>
    </citation>
    <scope>NUCLEOTIDE SEQUENCE [GENOMIC DNA]</scope>
    <source>
        <strain>BA 17-2</strain>
    </source>
</reference>
<reference key="2">
    <citation type="submission" date="1997-04" db="EMBL/GenBank/DDBJ databases">
        <title>Cloning and sequence analysis of Corynebacterium ammoniagenes guaA gene.</title>
        <authorList>
            <person name="Yonetani Y."/>
            <person name="Teshiba S."/>
        </authorList>
    </citation>
    <scope>NUCLEOTIDE SEQUENCE [GENOMIC DNA]</scope>
    <source>
        <strain>ATCC 6872 / DSM 20305 / IAM 1645 / KCTC 1019 / NCTC 2399</strain>
    </source>
</reference>